<name>TATB_AERS4</name>
<protein>
    <recommendedName>
        <fullName evidence="1">Sec-independent protein translocase protein TatB</fullName>
    </recommendedName>
</protein>
<sequence length="148" mass="16368">MFDIGFWELVVIGIVALVVLGPERLPVAIRTASHWIRLIRSTANSVKSELEQELRLQELHNDLKKAEQLQMSNLSPELQESIEQLKAAAQSVTRPYEQQNTIHPAPAAAEVKAEPAQPAAAMTHDEAPMVTTVQSTDVLADKKEEVKP</sequence>
<feature type="chain" id="PRO_0000301138" description="Sec-independent protein translocase protein TatB">
    <location>
        <begin position="1"/>
        <end position="148"/>
    </location>
</feature>
<feature type="transmembrane region" description="Helical" evidence="1">
    <location>
        <begin position="1"/>
        <end position="21"/>
    </location>
</feature>
<accession>A4STK7</accession>
<proteinExistence type="inferred from homology"/>
<keyword id="KW-0997">Cell inner membrane</keyword>
<keyword id="KW-1003">Cell membrane</keyword>
<keyword id="KW-0472">Membrane</keyword>
<keyword id="KW-0653">Protein transport</keyword>
<keyword id="KW-0811">Translocation</keyword>
<keyword id="KW-0812">Transmembrane</keyword>
<keyword id="KW-1133">Transmembrane helix</keyword>
<keyword id="KW-0813">Transport</keyword>
<comment type="function">
    <text evidence="1">Part of the twin-arginine translocation (Tat) system that transports large folded proteins containing a characteristic twin-arginine motif in their signal peptide across membranes. Together with TatC, TatB is part of a receptor directly interacting with Tat signal peptides. TatB may form an oligomeric binding site that transiently accommodates folded Tat precursor proteins before their translocation.</text>
</comment>
<comment type="subunit">
    <text evidence="1">The Tat system comprises two distinct complexes: a TatABC complex, containing multiple copies of TatA, TatB and TatC subunits, and a separate TatA complex, containing only TatA subunits. Substrates initially bind to the TatABC complex, which probably triggers association of the separate TatA complex to form the active translocon.</text>
</comment>
<comment type="subcellular location">
    <subcellularLocation>
        <location evidence="1">Cell inner membrane</location>
        <topology evidence="1">Single-pass membrane protein</topology>
    </subcellularLocation>
</comment>
<comment type="similarity">
    <text evidence="1">Belongs to the TatB family.</text>
</comment>
<dbReference type="EMBL" id="CP000644">
    <property type="protein sequence ID" value="ABO92229.1"/>
    <property type="molecule type" value="Genomic_DNA"/>
</dbReference>
<dbReference type="RefSeq" id="WP_005320703.1">
    <property type="nucleotide sequence ID" value="NC_009348.1"/>
</dbReference>
<dbReference type="SMR" id="A4STK7"/>
<dbReference type="STRING" id="29491.GCA_000820065_02792"/>
<dbReference type="GeneID" id="79881994"/>
<dbReference type="KEGG" id="asa:ASA_4305"/>
<dbReference type="eggNOG" id="COG1826">
    <property type="taxonomic scope" value="Bacteria"/>
</dbReference>
<dbReference type="HOGENOM" id="CLU_086034_1_0_6"/>
<dbReference type="Proteomes" id="UP000000225">
    <property type="component" value="Chromosome"/>
</dbReference>
<dbReference type="GO" id="GO:0033281">
    <property type="term" value="C:TAT protein transport complex"/>
    <property type="evidence" value="ECO:0007669"/>
    <property type="project" value="UniProtKB-UniRule"/>
</dbReference>
<dbReference type="GO" id="GO:0008320">
    <property type="term" value="F:protein transmembrane transporter activity"/>
    <property type="evidence" value="ECO:0007669"/>
    <property type="project" value="UniProtKB-UniRule"/>
</dbReference>
<dbReference type="GO" id="GO:0043953">
    <property type="term" value="P:protein transport by the Tat complex"/>
    <property type="evidence" value="ECO:0007669"/>
    <property type="project" value="UniProtKB-UniRule"/>
</dbReference>
<dbReference type="Gene3D" id="1.20.5.3310">
    <property type="match status" value="1"/>
</dbReference>
<dbReference type="HAMAP" id="MF_00237">
    <property type="entry name" value="TatB"/>
    <property type="match status" value="1"/>
</dbReference>
<dbReference type="InterPro" id="IPR003369">
    <property type="entry name" value="TatA/B/E"/>
</dbReference>
<dbReference type="InterPro" id="IPR018448">
    <property type="entry name" value="TatB"/>
</dbReference>
<dbReference type="NCBIfam" id="TIGR01410">
    <property type="entry name" value="tatB"/>
    <property type="match status" value="1"/>
</dbReference>
<dbReference type="PANTHER" id="PTHR33162">
    <property type="entry name" value="SEC-INDEPENDENT PROTEIN TRANSLOCASE PROTEIN TATA, CHLOROPLASTIC"/>
    <property type="match status" value="1"/>
</dbReference>
<dbReference type="PANTHER" id="PTHR33162:SF1">
    <property type="entry name" value="SEC-INDEPENDENT PROTEIN TRANSLOCASE PROTEIN TATA, CHLOROPLASTIC"/>
    <property type="match status" value="1"/>
</dbReference>
<dbReference type="Pfam" id="PF02416">
    <property type="entry name" value="TatA_B_E"/>
    <property type="match status" value="1"/>
</dbReference>
<dbReference type="PRINTS" id="PR01506">
    <property type="entry name" value="TATBPROTEIN"/>
</dbReference>
<reference key="1">
    <citation type="journal article" date="2008" name="BMC Genomics">
        <title>The genome of Aeromonas salmonicida subsp. salmonicida A449: insights into the evolution of a fish pathogen.</title>
        <authorList>
            <person name="Reith M.E."/>
            <person name="Singh R.K."/>
            <person name="Curtis B."/>
            <person name="Boyd J.M."/>
            <person name="Bouevitch A."/>
            <person name="Kimball J."/>
            <person name="Munholland J."/>
            <person name="Murphy C."/>
            <person name="Sarty D."/>
            <person name="Williams J."/>
            <person name="Nash J.H."/>
            <person name="Johnson S.C."/>
            <person name="Brown L.L."/>
        </authorList>
    </citation>
    <scope>NUCLEOTIDE SEQUENCE [LARGE SCALE GENOMIC DNA]</scope>
    <source>
        <strain>A449</strain>
    </source>
</reference>
<organism>
    <name type="scientific">Aeromonas salmonicida (strain A449)</name>
    <dbReference type="NCBI Taxonomy" id="382245"/>
    <lineage>
        <taxon>Bacteria</taxon>
        <taxon>Pseudomonadati</taxon>
        <taxon>Pseudomonadota</taxon>
        <taxon>Gammaproteobacteria</taxon>
        <taxon>Aeromonadales</taxon>
        <taxon>Aeromonadaceae</taxon>
        <taxon>Aeromonas</taxon>
    </lineage>
</organism>
<evidence type="ECO:0000255" key="1">
    <source>
        <dbReference type="HAMAP-Rule" id="MF_00237"/>
    </source>
</evidence>
<gene>
    <name evidence="1" type="primary">tatB</name>
    <name type="ordered locus">ASA_4305</name>
</gene>